<comment type="function">
    <text evidence="1">Peptidoglycan polymerase that is essential for cell division.</text>
</comment>
<comment type="catalytic activity">
    <reaction evidence="1">
        <text>[GlcNAc-(1-&gt;4)-Mur2Ac(oyl-L-Ala-gamma-D-Glu-L-Lys-D-Ala-D-Ala)](n)-di-trans,octa-cis-undecaprenyl diphosphate + beta-D-GlcNAc-(1-&gt;4)-Mur2Ac(oyl-L-Ala-gamma-D-Glu-L-Lys-D-Ala-D-Ala)-di-trans,octa-cis-undecaprenyl diphosphate = [GlcNAc-(1-&gt;4)-Mur2Ac(oyl-L-Ala-gamma-D-Glu-L-Lys-D-Ala-D-Ala)](n+1)-di-trans,octa-cis-undecaprenyl diphosphate + di-trans,octa-cis-undecaprenyl diphosphate + H(+)</text>
        <dbReference type="Rhea" id="RHEA:23708"/>
        <dbReference type="Rhea" id="RHEA-COMP:9602"/>
        <dbReference type="Rhea" id="RHEA-COMP:9603"/>
        <dbReference type="ChEBI" id="CHEBI:15378"/>
        <dbReference type="ChEBI" id="CHEBI:58405"/>
        <dbReference type="ChEBI" id="CHEBI:60033"/>
        <dbReference type="ChEBI" id="CHEBI:78435"/>
        <dbReference type="EC" id="2.4.99.28"/>
    </reaction>
</comment>
<comment type="pathway">
    <text evidence="1">Cell wall biogenesis; peptidoglycan biosynthesis.</text>
</comment>
<comment type="subcellular location">
    <subcellularLocation>
        <location evidence="1">Cell inner membrane</location>
        <topology evidence="1">Multi-pass membrane protein</topology>
    </subcellularLocation>
    <text evidence="1">Localizes to the division septum.</text>
</comment>
<comment type="similarity">
    <text evidence="1">Belongs to the SEDS family. FtsW subfamily.</text>
</comment>
<protein>
    <recommendedName>
        <fullName evidence="1">Probable peptidoglycan glycosyltransferase FtsW</fullName>
        <shortName evidence="1">PGT</shortName>
        <ecNumber evidence="1">2.4.99.28</ecNumber>
    </recommendedName>
    <alternativeName>
        <fullName evidence="1">Cell division protein FtsW</fullName>
    </alternativeName>
    <alternativeName>
        <fullName evidence="1">Cell wall polymerase</fullName>
    </alternativeName>
    <alternativeName>
        <fullName evidence="1">Peptidoglycan polymerase</fullName>
        <shortName evidence="1">PG polymerase</shortName>
    </alternativeName>
</protein>
<reference key="1">
    <citation type="journal article" date="2004" name="Proc. Natl. Acad. Sci. U.S.A.">
        <title>Genome sequence of the deep-sea gamma-proteobacterium Idiomarina loihiensis reveals amino acid fermentation as a source of carbon and energy.</title>
        <authorList>
            <person name="Hou S."/>
            <person name="Saw J.H."/>
            <person name="Lee K.S."/>
            <person name="Freitas T.A."/>
            <person name="Belisle C."/>
            <person name="Kawarabayasi Y."/>
            <person name="Donachie S.P."/>
            <person name="Pikina A."/>
            <person name="Galperin M.Y."/>
            <person name="Koonin E.V."/>
            <person name="Makarova K.S."/>
            <person name="Omelchenko M.V."/>
            <person name="Sorokin A."/>
            <person name="Wolf Y.I."/>
            <person name="Li Q.X."/>
            <person name="Keum Y.S."/>
            <person name="Campbell S."/>
            <person name="Denery J."/>
            <person name="Aizawa S."/>
            <person name="Shibata S."/>
            <person name="Malahoff A."/>
            <person name="Alam M."/>
        </authorList>
    </citation>
    <scope>NUCLEOTIDE SEQUENCE [LARGE SCALE GENOMIC DNA]</scope>
    <source>
        <strain>ATCC BAA-735 / DSM 15497 / L2-TR</strain>
    </source>
</reference>
<dbReference type="EC" id="2.4.99.28" evidence="1"/>
<dbReference type="EMBL" id="AE017340">
    <property type="protein sequence ID" value="AAV81278.1"/>
    <property type="molecule type" value="Genomic_DNA"/>
</dbReference>
<dbReference type="RefSeq" id="WP_011233696.1">
    <property type="nucleotide sequence ID" value="NC_006512.1"/>
</dbReference>
<dbReference type="SMR" id="Q5R0M2"/>
<dbReference type="STRING" id="283942.IL0435"/>
<dbReference type="GeneID" id="41335587"/>
<dbReference type="KEGG" id="ilo:IL0435"/>
<dbReference type="eggNOG" id="COG0772">
    <property type="taxonomic scope" value="Bacteria"/>
</dbReference>
<dbReference type="HOGENOM" id="CLU_029243_1_1_6"/>
<dbReference type="OrthoDB" id="9768187at2"/>
<dbReference type="UniPathway" id="UPA00219"/>
<dbReference type="Proteomes" id="UP000001171">
    <property type="component" value="Chromosome"/>
</dbReference>
<dbReference type="GO" id="GO:0032153">
    <property type="term" value="C:cell division site"/>
    <property type="evidence" value="ECO:0007669"/>
    <property type="project" value="UniProtKB-UniRule"/>
</dbReference>
<dbReference type="GO" id="GO:0005886">
    <property type="term" value="C:plasma membrane"/>
    <property type="evidence" value="ECO:0007669"/>
    <property type="project" value="UniProtKB-SubCell"/>
</dbReference>
<dbReference type="GO" id="GO:0015648">
    <property type="term" value="F:lipid-linked peptidoglycan transporter activity"/>
    <property type="evidence" value="ECO:0007669"/>
    <property type="project" value="TreeGrafter"/>
</dbReference>
<dbReference type="GO" id="GO:0008955">
    <property type="term" value="F:peptidoglycan glycosyltransferase activity"/>
    <property type="evidence" value="ECO:0007669"/>
    <property type="project" value="UniProtKB-UniRule"/>
</dbReference>
<dbReference type="GO" id="GO:0071555">
    <property type="term" value="P:cell wall organization"/>
    <property type="evidence" value="ECO:0007669"/>
    <property type="project" value="UniProtKB-KW"/>
</dbReference>
<dbReference type="GO" id="GO:0043093">
    <property type="term" value="P:FtsZ-dependent cytokinesis"/>
    <property type="evidence" value="ECO:0007669"/>
    <property type="project" value="UniProtKB-UniRule"/>
</dbReference>
<dbReference type="GO" id="GO:0009252">
    <property type="term" value="P:peptidoglycan biosynthetic process"/>
    <property type="evidence" value="ECO:0007669"/>
    <property type="project" value="UniProtKB-UniRule"/>
</dbReference>
<dbReference type="GO" id="GO:0008360">
    <property type="term" value="P:regulation of cell shape"/>
    <property type="evidence" value="ECO:0007669"/>
    <property type="project" value="UniProtKB-KW"/>
</dbReference>
<dbReference type="HAMAP" id="MF_00913">
    <property type="entry name" value="PGT_FtsW_proteobact"/>
    <property type="match status" value="1"/>
</dbReference>
<dbReference type="InterPro" id="IPR018365">
    <property type="entry name" value="Cell_cycle_FtsW-rel_CS"/>
</dbReference>
<dbReference type="InterPro" id="IPR013437">
    <property type="entry name" value="FtsW"/>
</dbReference>
<dbReference type="InterPro" id="IPR001182">
    <property type="entry name" value="FtsW/RodA"/>
</dbReference>
<dbReference type="NCBIfam" id="TIGR02614">
    <property type="entry name" value="ftsW"/>
    <property type="match status" value="1"/>
</dbReference>
<dbReference type="PANTHER" id="PTHR30474">
    <property type="entry name" value="CELL CYCLE PROTEIN"/>
    <property type="match status" value="1"/>
</dbReference>
<dbReference type="PANTHER" id="PTHR30474:SF2">
    <property type="entry name" value="PEPTIDOGLYCAN GLYCOSYLTRANSFERASE FTSW-RELATED"/>
    <property type="match status" value="1"/>
</dbReference>
<dbReference type="Pfam" id="PF01098">
    <property type="entry name" value="FTSW_RODA_SPOVE"/>
    <property type="match status" value="1"/>
</dbReference>
<dbReference type="PROSITE" id="PS00428">
    <property type="entry name" value="FTSW_RODA_SPOVE"/>
    <property type="match status" value="1"/>
</dbReference>
<feature type="chain" id="PRO_0000415192" description="Probable peptidoglycan glycosyltransferase FtsW">
    <location>
        <begin position="1"/>
        <end position="409"/>
    </location>
</feature>
<feature type="transmembrane region" description="Helical" evidence="1">
    <location>
        <begin position="42"/>
        <end position="62"/>
    </location>
</feature>
<feature type="transmembrane region" description="Helical" evidence="1">
    <location>
        <begin position="72"/>
        <end position="92"/>
    </location>
</feature>
<feature type="transmembrane region" description="Helical" evidence="1">
    <location>
        <begin position="108"/>
        <end position="128"/>
    </location>
</feature>
<feature type="transmembrane region" description="Helical" evidence="1">
    <location>
        <begin position="135"/>
        <end position="155"/>
    </location>
</feature>
<feature type="transmembrane region" description="Helical" evidence="1">
    <location>
        <begin position="178"/>
        <end position="198"/>
    </location>
</feature>
<feature type="transmembrane region" description="Helical" evidence="1">
    <location>
        <begin position="213"/>
        <end position="233"/>
    </location>
</feature>
<feature type="transmembrane region" description="Helical" evidence="1">
    <location>
        <begin position="303"/>
        <end position="323"/>
    </location>
</feature>
<feature type="transmembrane region" description="Helical" evidence="1">
    <location>
        <begin position="337"/>
        <end position="357"/>
    </location>
</feature>
<feature type="transmembrane region" description="Helical" evidence="1">
    <location>
        <begin position="368"/>
        <end position="388"/>
    </location>
</feature>
<organism>
    <name type="scientific">Idiomarina loihiensis (strain ATCC BAA-735 / DSM 15497 / L2-TR)</name>
    <dbReference type="NCBI Taxonomy" id="283942"/>
    <lineage>
        <taxon>Bacteria</taxon>
        <taxon>Pseudomonadati</taxon>
        <taxon>Pseudomonadota</taxon>
        <taxon>Gammaproteobacteria</taxon>
        <taxon>Alteromonadales</taxon>
        <taxon>Idiomarinaceae</taxon>
        <taxon>Idiomarina</taxon>
    </lineage>
</organism>
<keyword id="KW-0131">Cell cycle</keyword>
<keyword id="KW-0132">Cell division</keyword>
<keyword id="KW-0997">Cell inner membrane</keyword>
<keyword id="KW-1003">Cell membrane</keyword>
<keyword id="KW-0133">Cell shape</keyword>
<keyword id="KW-0961">Cell wall biogenesis/degradation</keyword>
<keyword id="KW-0328">Glycosyltransferase</keyword>
<keyword id="KW-0472">Membrane</keyword>
<keyword id="KW-0573">Peptidoglycan synthesis</keyword>
<keyword id="KW-1185">Reference proteome</keyword>
<keyword id="KW-0808">Transferase</keyword>
<keyword id="KW-0812">Transmembrane</keyword>
<keyword id="KW-1133">Transmembrane helix</keyword>
<proteinExistence type="inferred from homology"/>
<sequence length="409" mass="45093">MSTVREEQLNLEIPASDVGSRWQKLINWFQPKASQPLYDRMLFTLAMALLAFGFVMVTSASLPTADRLTGNPFHFAIRHGIYILISLAVMLATLRVPANSWNQQSGKLLLLGLIMLLMVLVVGYEVNGAQRWIKVGPITFQAAEVAKLFFCIYMASYLSRREDEVREATKGFIKPLALLFIAAVLLLMQPDFGTVVVLSATTVAMLFLAGARLWQFFAVFITCVLALILLIIVEPYRMQRLLTFLEPEKDPFGAGYQLMQSLIAFGQGHFSGAGLGNSIQKLQYLPEAHTDFIMAVVAEELGFLGVLAVIATVLMLVWRALIIGRRCLMQEQRYGGYLAYGIGIWFSIQAFVNIGVASGALPTKGLTLPLVSYGGNSLIISALAVGLLLRIDHERRMLGRKVAPRGGAE</sequence>
<name>FTSW_IDILO</name>
<evidence type="ECO:0000255" key="1">
    <source>
        <dbReference type="HAMAP-Rule" id="MF_00913"/>
    </source>
</evidence>
<accession>Q5R0M2</accession>
<gene>
    <name evidence="1" type="primary">ftsW</name>
    <name type="ordered locus">IL0435</name>
</gene>